<evidence type="ECO:0000250" key="1">
    <source>
        <dbReference type="UniProtKB" id="P01514"/>
    </source>
</evidence>
<evidence type="ECO:0000250" key="2">
    <source>
        <dbReference type="UniProtKB" id="P01518"/>
    </source>
</evidence>
<evidence type="ECO:0000250" key="3">
    <source>
        <dbReference type="UniProtKB" id="P84914"/>
    </source>
</evidence>
<evidence type="ECO:0000269" key="4">
    <source>
    </source>
</evidence>
<evidence type="ECO:0000303" key="5">
    <source>
    </source>
</evidence>
<evidence type="ECO:0000305" key="6"/>
<evidence type="ECO:0000305" key="7">
    <source>
    </source>
</evidence>
<dbReference type="GO" id="GO:0005576">
    <property type="term" value="C:extracellular region"/>
    <property type="evidence" value="ECO:0007669"/>
    <property type="project" value="UniProtKB-SubCell"/>
</dbReference>
<dbReference type="GO" id="GO:0090729">
    <property type="term" value="F:toxin activity"/>
    <property type="evidence" value="ECO:0007669"/>
    <property type="project" value="UniProtKB-KW"/>
</dbReference>
<dbReference type="GO" id="GO:0042742">
    <property type="term" value="P:defense response to bacterium"/>
    <property type="evidence" value="ECO:0007669"/>
    <property type="project" value="UniProtKB-KW"/>
</dbReference>
<dbReference type="GO" id="GO:0050832">
    <property type="term" value="P:defense response to fungus"/>
    <property type="evidence" value="ECO:0007669"/>
    <property type="project" value="UniProtKB-KW"/>
</dbReference>
<dbReference type="GO" id="GO:0045087">
    <property type="term" value="P:innate immune response"/>
    <property type="evidence" value="ECO:0007669"/>
    <property type="project" value="UniProtKB-KW"/>
</dbReference>
<dbReference type="GO" id="GO:0031640">
    <property type="term" value="P:killing of cells of another organism"/>
    <property type="evidence" value="ECO:0007669"/>
    <property type="project" value="UniProtKB-KW"/>
</dbReference>
<sequence length="13" mass="1462">FLPIPRPILLGLL</sequence>
<organism>
    <name type="scientific">Vespa magnifica</name>
    <name type="common">Hornet</name>
    <dbReference type="NCBI Taxonomy" id="202807"/>
    <lineage>
        <taxon>Eukaryota</taxon>
        <taxon>Metazoa</taxon>
        <taxon>Ecdysozoa</taxon>
        <taxon>Arthropoda</taxon>
        <taxon>Hexapoda</taxon>
        <taxon>Insecta</taxon>
        <taxon>Pterygota</taxon>
        <taxon>Neoptera</taxon>
        <taxon>Endopterygota</taxon>
        <taxon>Hymenoptera</taxon>
        <taxon>Apocrita</taxon>
        <taxon>Aculeata</taxon>
        <taxon>Vespoidea</taxon>
        <taxon>Vespidae</taxon>
        <taxon>Vespinae</taxon>
        <taxon>Vespa</taxon>
    </lineage>
</organism>
<keyword id="KW-0027">Amidation</keyword>
<keyword id="KW-0044">Antibiotic</keyword>
<keyword id="KW-0929">Antimicrobial</keyword>
<keyword id="KW-0903">Direct protein sequencing</keyword>
<keyword id="KW-0295">Fungicide</keyword>
<keyword id="KW-1213">G-protein coupled receptor impairing toxin</keyword>
<keyword id="KW-0391">Immunity</keyword>
<keyword id="KW-0399">Innate immunity</keyword>
<keyword id="KW-0467">Mast cell degranulation</keyword>
<keyword id="KW-0964">Secreted</keyword>
<keyword id="KW-0800">Toxin</keyword>
<reference key="1">
    <citation type="journal article" date="2006" name="Toxicon">
        <title>Two families of antimicrobial peptides from wasp (Vespa magnifica) venom.</title>
        <authorList>
            <person name="Xu X."/>
            <person name="Li J."/>
            <person name="Lu Q."/>
            <person name="Yang H."/>
            <person name="Zhang Y."/>
            <person name="Lai R."/>
        </authorList>
    </citation>
    <scope>PROTEIN SEQUENCE</scope>
    <scope>FUNCTION</scope>
    <scope>SUBCELLULAR LOCATION</scope>
    <source>
        <tissue>Venom</tissue>
    </source>
</reference>
<accession>P0C1M2</accession>
<feature type="peptide" id="PRO_0000246008" description="Vespid chemotactic peptide 5f" evidence="4">
    <location>
        <begin position="1"/>
        <end position="13"/>
    </location>
</feature>
<feature type="modified residue" description="Leucine amide" evidence="2">
    <location>
        <position position="13"/>
    </location>
</feature>
<protein>
    <recommendedName>
        <fullName evidence="5">Vespid chemotactic peptide 5f</fullName>
        <shortName evidence="7">VCP 5f</shortName>
    </recommendedName>
</protein>
<name>CRBLF_VESMG</name>
<proteinExistence type="evidence at protein level"/>
<comment type="function">
    <text evidence="1 2 3 4">Mast cell degranulating peptide (By similarity). Shows antimicrobial activity against the Gram-negative bacteria E.coli ATCC 25922 (MIC=30 ug/ml), the Gram-positive bacteria S.aureus ATCC 2592 (MIC=10 ug/ml) and the fungus C.albicans ATCC 2002 (MIC=25 ug/ml) (PubMed:16330062). Has little hemolytic activity (By similarity) (PubMed:16330062). Its mast cell degranulation activity may be related to the activation of G-protein coupled receptors in mast cells as well as interaction with other proteins located in cell endosomal membranes in the mast cells (By similarity).</text>
</comment>
<comment type="subcellular location">
    <subcellularLocation>
        <location evidence="4">Secreted</location>
    </subcellularLocation>
</comment>
<comment type="tissue specificity">
    <text evidence="7">Expressed by the venom gland.</text>
</comment>
<comment type="similarity">
    <text evidence="6">Belongs to the MCD family. Crabrolin subfamily.</text>
</comment>